<organism>
    <name type="scientific">Geodia cydonium</name>
    <name type="common">Sponge</name>
    <dbReference type="NCBI Taxonomy" id="6047"/>
    <lineage>
        <taxon>Eukaryota</taxon>
        <taxon>Metazoa</taxon>
        <taxon>Porifera</taxon>
        <taxon>Demospongiae</taxon>
        <taxon>Heteroscleromorpha</taxon>
        <taxon>Tetractinellida</taxon>
        <taxon>Astrophorina</taxon>
        <taxon>Geodiidae</taxon>
        <taxon>Geodia</taxon>
    </lineage>
</organism>
<reference key="1">
    <citation type="journal article" date="2002" name="Food Technol. Biotechnol.">
        <title>Signal recognition particle 54 kD protein (SRP54) from the marine sponge Geodia cydonium.</title>
        <authorList>
            <person name="Durajlija-Zinic S."/>
            <person name="Cetkovic H."/>
            <person name="Mueller W.E.G."/>
            <person name="Gamulin V."/>
        </authorList>
    </citation>
    <scope>NUCLEOTIDE SEQUENCE [MRNA]</scope>
</reference>
<evidence type="ECO:0000250" key="1"/>
<evidence type="ECO:0000250" key="2">
    <source>
        <dbReference type="UniProtKB" id="P61010"/>
    </source>
</evidence>
<evidence type="ECO:0000250" key="3">
    <source>
        <dbReference type="UniProtKB" id="P61011"/>
    </source>
</evidence>
<evidence type="ECO:0000305" key="4"/>
<accession>Q8MZJ6</accession>
<feature type="chain" id="PRO_0000101198" description="Signal recognition particle subunit SRP54">
    <location>
        <begin position="1"/>
        <end position="499"/>
    </location>
</feature>
<feature type="region of interest" description="NG-domain" evidence="3">
    <location>
        <begin position="1"/>
        <end position="294"/>
    </location>
</feature>
<feature type="region of interest" description="M-domain" evidence="3">
    <location>
        <begin position="295"/>
        <end position="499"/>
    </location>
</feature>
<feature type="binding site" evidence="1">
    <location>
        <begin position="107"/>
        <end position="114"/>
    </location>
    <ligand>
        <name>GTP</name>
        <dbReference type="ChEBI" id="CHEBI:37565"/>
    </ligand>
</feature>
<feature type="binding site" evidence="1">
    <location>
        <begin position="189"/>
        <end position="193"/>
    </location>
    <ligand>
        <name>GTP</name>
        <dbReference type="ChEBI" id="CHEBI:37565"/>
    </ligand>
</feature>
<feature type="binding site" evidence="1">
    <location>
        <begin position="247"/>
        <end position="250"/>
    </location>
    <ligand>
        <name>GTP</name>
        <dbReference type="ChEBI" id="CHEBI:37565"/>
    </ligand>
</feature>
<name>SRP54_GEOCY</name>
<keyword id="KW-0963">Cytoplasm</keyword>
<keyword id="KW-0256">Endoplasmic reticulum</keyword>
<keyword id="KW-0342">GTP-binding</keyword>
<keyword id="KW-0378">Hydrolase</keyword>
<keyword id="KW-0547">Nucleotide-binding</keyword>
<keyword id="KW-0539">Nucleus</keyword>
<keyword id="KW-0687">Ribonucleoprotein</keyword>
<keyword id="KW-0694">RNA-binding</keyword>
<keyword id="KW-0733">Signal recognition particle</keyword>
<sequence length="499" mass="55175">MVLADLGRKITTALLPRQRTVINEEVLQAMLKEICTALLEADVNVKLVGKLRQNVRAAIDFEDMGAGLSKRRIIQTSVFNELCKLLDPGVPVWHPTKGHSNVIMFVGLQGSGKTTTCTKLAYHYQKKGWKTCLVCADTFRAGAFDQLKQNATKARVPFYGSYTEMDPVVIAQEGVEKFKEDSFEVIIVDTSGRHKQEESLFEEMLQVSQAIDPDNIIFVMDGTIGQACESQARAFKEKVDVASVIVTKLDGHAKGGGALSAVAATRSPIIFIGTGEHIDEMEPFKTKPFVSKLLGMGDLEGLMEKVSDLKLDENEELMDKLKHGQFTLRDMYEQFQNIMKMGPFNQIIGMIPGFSPDFMSKGNERESMAKLKRLMTMMDSMNDGELDHPNGAKLFSKQPGRAARVARGSGTSVREVNELLKQYSNFSATVKKMGGIKGLFKGGDLGKNVNPSQMAKLNQQMAKMMDPRVLQQMGGMSGLQNMMRQFQQGASNMPGFKGK</sequence>
<gene>
    <name type="primary">SRP54</name>
</gene>
<proteinExistence type="evidence at transcript level"/>
<protein>
    <recommendedName>
        <fullName>Signal recognition particle subunit SRP54</fullName>
        <ecNumber evidence="3">3.6.5.4</ecNumber>
    </recommendedName>
    <alternativeName>
        <fullName>Signal recognition particle 54 kDa protein</fullName>
    </alternativeName>
</protein>
<dbReference type="EC" id="3.6.5.4" evidence="3"/>
<dbReference type="EMBL" id="AY100457">
    <property type="protein sequence ID" value="AAM23234.1"/>
    <property type="molecule type" value="mRNA"/>
</dbReference>
<dbReference type="SMR" id="Q8MZJ6"/>
<dbReference type="GO" id="GO:0005829">
    <property type="term" value="C:cytosol"/>
    <property type="evidence" value="ECO:0007669"/>
    <property type="project" value="TreeGrafter"/>
</dbReference>
<dbReference type="GO" id="GO:0005783">
    <property type="term" value="C:endoplasmic reticulum"/>
    <property type="evidence" value="ECO:0007669"/>
    <property type="project" value="UniProtKB-SubCell"/>
</dbReference>
<dbReference type="GO" id="GO:0016607">
    <property type="term" value="C:nuclear speck"/>
    <property type="evidence" value="ECO:0007669"/>
    <property type="project" value="UniProtKB-SubCell"/>
</dbReference>
<dbReference type="GO" id="GO:0005786">
    <property type="term" value="C:signal recognition particle, endoplasmic reticulum targeting"/>
    <property type="evidence" value="ECO:0007669"/>
    <property type="project" value="UniProtKB-KW"/>
</dbReference>
<dbReference type="GO" id="GO:0008312">
    <property type="term" value="F:7S RNA binding"/>
    <property type="evidence" value="ECO:0007669"/>
    <property type="project" value="InterPro"/>
</dbReference>
<dbReference type="GO" id="GO:0016887">
    <property type="term" value="F:ATP hydrolysis activity"/>
    <property type="evidence" value="ECO:0007669"/>
    <property type="project" value="InterPro"/>
</dbReference>
<dbReference type="GO" id="GO:0030942">
    <property type="term" value="F:endoplasmic reticulum signal peptide binding"/>
    <property type="evidence" value="ECO:0007669"/>
    <property type="project" value="TreeGrafter"/>
</dbReference>
<dbReference type="GO" id="GO:0005525">
    <property type="term" value="F:GTP binding"/>
    <property type="evidence" value="ECO:0007669"/>
    <property type="project" value="UniProtKB-KW"/>
</dbReference>
<dbReference type="GO" id="GO:0003924">
    <property type="term" value="F:GTPase activity"/>
    <property type="evidence" value="ECO:0007669"/>
    <property type="project" value="InterPro"/>
</dbReference>
<dbReference type="GO" id="GO:0006616">
    <property type="term" value="P:SRP-dependent cotranslational protein targeting to membrane, translocation"/>
    <property type="evidence" value="ECO:0007669"/>
    <property type="project" value="TreeGrafter"/>
</dbReference>
<dbReference type="CDD" id="cd17875">
    <property type="entry name" value="SRP54_G"/>
    <property type="match status" value="1"/>
</dbReference>
<dbReference type="FunFam" id="1.10.260.30:FF:000002">
    <property type="entry name" value="Signal recognition particle 54 kDa protein"/>
    <property type="match status" value="1"/>
</dbReference>
<dbReference type="FunFam" id="3.40.50.300:FF:000022">
    <property type="entry name" value="Signal recognition particle 54 kDa subunit"/>
    <property type="match status" value="1"/>
</dbReference>
<dbReference type="Gene3D" id="3.40.50.300">
    <property type="entry name" value="P-loop containing nucleotide triphosphate hydrolases"/>
    <property type="match status" value="1"/>
</dbReference>
<dbReference type="Gene3D" id="1.20.120.140">
    <property type="entry name" value="Signal recognition particle SRP54, nucleotide-binding domain"/>
    <property type="match status" value="1"/>
</dbReference>
<dbReference type="Gene3D" id="1.10.260.30">
    <property type="entry name" value="Signal recognition particle, SRP54 subunit, M-domain"/>
    <property type="match status" value="1"/>
</dbReference>
<dbReference type="HAMAP" id="MF_00306">
    <property type="entry name" value="SRP54"/>
    <property type="match status" value="1"/>
</dbReference>
<dbReference type="InterPro" id="IPR003593">
    <property type="entry name" value="AAA+_ATPase"/>
</dbReference>
<dbReference type="InterPro" id="IPR027417">
    <property type="entry name" value="P-loop_NTPase"/>
</dbReference>
<dbReference type="InterPro" id="IPR036891">
    <property type="entry name" value="Signal_recog_part_SRP54_M_sf"/>
</dbReference>
<dbReference type="InterPro" id="IPR013822">
    <property type="entry name" value="Signal_recog_particl_SRP54_hlx"/>
</dbReference>
<dbReference type="InterPro" id="IPR004125">
    <property type="entry name" value="Signal_recog_particle_SRP54_M"/>
</dbReference>
<dbReference type="InterPro" id="IPR036225">
    <property type="entry name" value="SRP/SRP_N"/>
</dbReference>
<dbReference type="InterPro" id="IPR022941">
    <property type="entry name" value="SRP54"/>
</dbReference>
<dbReference type="InterPro" id="IPR006325">
    <property type="entry name" value="SRP54_euk"/>
</dbReference>
<dbReference type="InterPro" id="IPR000897">
    <property type="entry name" value="SRP54_GTPase_dom"/>
</dbReference>
<dbReference type="InterPro" id="IPR042101">
    <property type="entry name" value="SRP54_N_sf"/>
</dbReference>
<dbReference type="NCBIfam" id="TIGR01425">
    <property type="entry name" value="SRP54_euk"/>
    <property type="match status" value="1"/>
</dbReference>
<dbReference type="PANTHER" id="PTHR11564">
    <property type="entry name" value="SIGNAL RECOGNITION PARTICLE 54K PROTEIN SRP54"/>
    <property type="match status" value="1"/>
</dbReference>
<dbReference type="PANTHER" id="PTHR11564:SF5">
    <property type="entry name" value="SIGNAL RECOGNITION PARTICLE SUBUNIT SRP54"/>
    <property type="match status" value="1"/>
</dbReference>
<dbReference type="Pfam" id="PF00448">
    <property type="entry name" value="SRP54"/>
    <property type="match status" value="1"/>
</dbReference>
<dbReference type="Pfam" id="PF02881">
    <property type="entry name" value="SRP54_N"/>
    <property type="match status" value="1"/>
</dbReference>
<dbReference type="Pfam" id="PF02978">
    <property type="entry name" value="SRP_SPB"/>
    <property type="match status" value="1"/>
</dbReference>
<dbReference type="SMART" id="SM00382">
    <property type="entry name" value="AAA"/>
    <property type="match status" value="1"/>
</dbReference>
<dbReference type="SMART" id="SM00962">
    <property type="entry name" value="SRP54"/>
    <property type="match status" value="1"/>
</dbReference>
<dbReference type="SMART" id="SM00963">
    <property type="entry name" value="SRP54_N"/>
    <property type="match status" value="1"/>
</dbReference>
<dbReference type="SUPFAM" id="SSF47364">
    <property type="entry name" value="Domain of the SRP/SRP receptor G-proteins"/>
    <property type="match status" value="1"/>
</dbReference>
<dbReference type="SUPFAM" id="SSF52540">
    <property type="entry name" value="P-loop containing nucleoside triphosphate hydrolases"/>
    <property type="match status" value="1"/>
</dbReference>
<dbReference type="SUPFAM" id="SSF47446">
    <property type="entry name" value="Signal peptide-binding domain"/>
    <property type="match status" value="1"/>
</dbReference>
<dbReference type="PROSITE" id="PS00300">
    <property type="entry name" value="SRP54"/>
    <property type="match status" value="1"/>
</dbReference>
<comment type="function">
    <text evidence="2 3">Component of the signal recognition particle (SRP) complex, a ribonucleoprotein complex that mediates the cotranslational targeting of secretory and membrane proteins to the endoplasmic reticulum (ER) (By similarity). As part of the SRP complex, associates with the SRP receptor (SR) component SRPRA to target secretory proteins to the endoplasmic reticulum membrane (By similarity). Binds to the signal sequence of presecretory proteins when they emerge from the ribosomes (By similarity). Displays basal GTPase activity, and stimulates reciprocal GTPase activation of the SR subunit SRPRA (By similarity). Forms a guanosine 5'-triphosphate (GTP)-dependent complex with the SR subunit SRPRA (By similarity). SR compaction and GTPase mediated rearrangement of SR drive SRP-mediated cotranslational protein translocation into the ER (By similarity). Requires the presence of SRP9/SRP14 and/or SRP19 to stably interact with RNA (By similarity).</text>
</comment>
<comment type="catalytic activity">
    <reaction evidence="3">
        <text>GTP + H2O = GDP + phosphate + H(+)</text>
        <dbReference type="Rhea" id="RHEA:19669"/>
        <dbReference type="ChEBI" id="CHEBI:15377"/>
        <dbReference type="ChEBI" id="CHEBI:15378"/>
        <dbReference type="ChEBI" id="CHEBI:37565"/>
        <dbReference type="ChEBI" id="CHEBI:43474"/>
        <dbReference type="ChEBI" id="CHEBI:58189"/>
        <dbReference type="EC" id="3.6.5.4"/>
    </reaction>
    <physiologicalReaction direction="left-to-right" evidence="3">
        <dbReference type="Rhea" id="RHEA:19670"/>
    </physiologicalReaction>
</comment>
<comment type="subunit">
    <text evidence="3">Component of a signal recognition particle (SRP) complex that consists of a 7SL RNA molecule of 300 nucleotides and six protein subunits: SRP72, SRP68, SRP54, SRP19, SRP14 and SRP9.</text>
</comment>
<comment type="subcellular location">
    <subcellularLocation>
        <location evidence="3">Nucleus speckle</location>
    </subcellularLocation>
    <subcellularLocation>
        <location evidence="3">Cytoplasm</location>
    </subcellularLocation>
    <subcellularLocation>
        <location evidence="3">Endoplasmic reticulum</location>
    </subcellularLocation>
</comment>
<comment type="domain">
    <text evidence="3">The NG domain, also named G domain, is a special guanosine triphosphatase (GTPase) domain, which binds GTP and forms a guanosine 5'-triphosphate (GTP)-dependent complex with a homologous NG domain in the SRP receptor subunit SRPRA (By similarity). The two NG domains undergo cooperative rearrangements upon their assembly, which culminate in the reciprocal activation of the GTPase activity of one another (By similarity). SRP receptor compaction upon binding with cargo-loaded SRP and GTPase rearrangement drive SRP-mediated cotranslational protein translocation into the ER (By similarity).</text>
</comment>
<comment type="domain">
    <text evidence="3">The M domain binds the 7SL RNA in presence of SRP19 and binds the signal sequence of presecretory proteins.</text>
</comment>
<comment type="similarity">
    <text evidence="4">Belongs to the GTP-binding SRP family. SRP54 subfamily.</text>
</comment>